<proteinExistence type="inferred from homology"/>
<organism>
    <name type="scientific">Shewanella piezotolerans (strain WP3 / JCM 13877)</name>
    <dbReference type="NCBI Taxonomy" id="225849"/>
    <lineage>
        <taxon>Bacteria</taxon>
        <taxon>Pseudomonadati</taxon>
        <taxon>Pseudomonadota</taxon>
        <taxon>Gammaproteobacteria</taxon>
        <taxon>Alteromonadales</taxon>
        <taxon>Shewanellaceae</taxon>
        <taxon>Shewanella</taxon>
    </lineage>
</organism>
<reference key="1">
    <citation type="journal article" date="2008" name="PLoS ONE">
        <title>Environmental adaptation: genomic analysis of the piezotolerant and psychrotolerant deep-sea iron reducing bacterium Shewanella piezotolerans WP3.</title>
        <authorList>
            <person name="Wang F."/>
            <person name="Wang J."/>
            <person name="Jian H."/>
            <person name="Zhang B."/>
            <person name="Li S."/>
            <person name="Wang F."/>
            <person name="Zeng X."/>
            <person name="Gao L."/>
            <person name="Bartlett D.H."/>
            <person name="Yu J."/>
            <person name="Hu S."/>
            <person name="Xiao X."/>
        </authorList>
    </citation>
    <scope>NUCLEOTIDE SEQUENCE [LARGE SCALE GENOMIC DNA]</scope>
    <source>
        <strain>WP3 / JCM 13877</strain>
    </source>
</reference>
<dbReference type="EC" id="7.-.-.-" evidence="1"/>
<dbReference type="EMBL" id="CP000472">
    <property type="protein sequence ID" value="ACJ29115.1"/>
    <property type="molecule type" value="Genomic_DNA"/>
</dbReference>
<dbReference type="SMR" id="B8CM58"/>
<dbReference type="STRING" id="225849.swp_2371"/>
<dbReference type="KEGG" id="swp:swp_2371"/>
<dbReference type="eggNOG" id="COG4657">
    <property type="taxonomic scope" value="Bacteria"/>
</dbReference>
<dbReference type="HOGENOM" id="CLU_095255_1_0_6"/>
<dbReference type="OrthoDB" id="9803631at2"/>
<dbReference type="Proteomes" id="UP000000753">
    <property type="component" value="Chromosome"/>
</dbReference>
<dbReference type="GO" id="GO:0005886">
    <property type="term" value="C:plasma membrane"/>
    <property type="evidence" value="ECO:0007669"/>
    <property type="project" value="UniProtKB-SubCell"/>
</dbReference>
<dbReference type="GO" id="GO:0022900">
    <property type="term" value="P:electron transport chain"/>
    <property type="evidence" value="ECO:0007669"/>
    <property type="project" value="UniProtKB-UniRule"/>
</dbReference>
<dbReference type="HAMAP" id="MF_00459">
    <property type="entry name" value="RsxA_RnfA"/>
    <property type="match status" value="1"/>
</dbReference>
<dbReference type="InterPro" id="IPR011293">
    <property type="entry name" value="Ion_transpt_RnfA/RsxA"/>
</dbReference>
<dbReference type="InterPro" id="IPR003667">
    <property type="entry name" value="NqrDE/RnfAE"/>
</dbReference>
<dbReference type="InterPro" id="IPR050133">
    <property type="entry name" value="NqrDE/RnfAE_oxidrdctase"/>
</dbReference>
<dbReference type="NCBIfam" id="NF003481">
    <property type="entry name" value="PRK05151.1"/>
    <property type="match status" value="1"/>
</dbReference>
<dbReference type="NCBIfam" id="TIGR01943">
    <property type="entry name" value="rnfA"/>
    <property type="match status" value="1"/>
</dbReference>
<dbReference type="PANTHER" id="PTHR30335">
    <property type="entry name" value="INTEGRAL MEMBRANE PROTEIN OF SOXR-REDUCING COMPLEX"/>
    <property type="match status" value="1"/>
</dbReference>
<dbReference type="PANTHER" id="PTHR30335:SF0">
    <property type="entry name" value="ION-TRANSLOCATING OXIDOREDUCTASE COMPLEX SUBUNIT A"/>
    <property type="match status" value="1"/>
</dbReference>
<dbReference type="Pfam" id="PF02508">
    <property type="entry name" value="Rnf-Nqr"/>
    <property type="match status" value="1"/>
</dbReference>
<dbReference type="PIRSF" id="PIRSF006102">
    <property type="entry name" value="NQR_DE"/>
    <property type="match status" value="1"/>
</dbReference>
<name>RNFA_SHEPW</name>
<comment type="function">
    <text evidence="1">Part of a membrane-bound complex that couples electron transfer with translocation of ions across the membrane.</text>
</comment>
<comment type="subunit">
    <text evidence="1">The complex is composed of six subunits: RnfA, RnfB, RnfC, RnfD, RnfE and RnfG.</text>
</comment>
<comment type="subcellular location">
    <subcellularLocation>
        <location evidence="1">Cell inner membrane</location>
        <topology evidence="1">Multi-pass membrane protein</topology>
    </subcellularLocation>
</comment>
<comment type="similarity">
    <text evidence="1">Belongs to the NqrDE/RnfAE family.</text>
</comment>
<accession>B8CM58</accession>
<protein>
    <recommendedName>
        <fullName evidence="1">Ion-translocating oxidoreductase complex subunit A</fullName>
        <ecNumber evidence="1">7.-.-.-</ecNumber>
    </recommendedName>
    <alternativeName>
        <fullName evidence="1">Rnf electron transport complex subunit A</fullName>
    </alternativeName>
</protein>
<sequence>MSEYLLLLVGTVLVNNFVLVKFLGLCPFMGVSSKLESAIGMSMATTFVLTLASILSYLVNQYLLLPFDLGYLRTMSFILVIAVVVQFTEMLVQKTSASLHRALGIYLPLITTNCAVLGVALLNINEDHNFFESAIFGFGAAVGFSLVLILFSAMRERLAAADVPAPFKGGAIAMVTAGLMSLAFMGFTGLVK</sequence>
<evidence type="ECO:0000255" key="1">
    <source>
        <dbReference type="HAMAP-Rule" id="MF_00459"/>
    </source>
</evidence>
<feature type="chain" id="PRO_1000125315" description="Ion-translocating oxidoreductase complex subunit A">
    <location>
        <begin position="1"/>
        <end position="192"/>
    </location>
</feature>
<feature type="transmembrane region" description="Helical" evidence="1">
    <location>
        <begin position="5"/>
        <end position="25"/>
    </location>
</feature>
<feature type="transmembrane region" description="Helical" evidence="1">
    <location>
        <begin position="39"/>
        <end position="59"/>
    </location>
</feature>
<feature type="transmembrane region" description="Helical" evidence="1">
    <location>
        <begin position="65"/>
        <end position="85"/>
    </location>
</feature>
<feature type="transmembrane region" description="Helical" evidence="1">
    <location>
        <begin position="102"/>
        <end position="122"/>
    </location>
</feature>
<feature type="transmembrane region" description="Helical" evidence="1">
    <location>
        <begin position="134"/>
        <end position="154"/>
    </location>
</feature>
<feature type="transmembrane region" description="Helical" evidence="1">
    <location>
        <begin position="171"/>
        <end position="191"/>
    </location>
</feature>
<keyword id="KW-0997">Cell inner membrane</keyword>
<keyword id="KW-1003">Cell membrane</keyword>
<keyword id="KW-0249">Electron transport</keyword>
<keyword id="KW-0472">Membrane</keyword>
<keyword id="KW-1278">Translocase</keyword>
<keyword id="KW-0812">Transmembrane</keyword>
<keyword id="KW-1133">Transmembrane helix</keyword>
<keyword id="KW-0813">Transport</keyword>
<gene>
    <name evidence="1" type="primary">rnfA</name>
    <name type="ordered locus">swp_2371</name>
</gene>